<protein>
    <recommendedName>
        <fullName evidence="1">Holliday junction branch migration complex subunit RuvA</fullName>
    </recommendedName>
</protein>
<accession>Q3A231</accession>
<dbReference type="EMBL" id="CP000142">
    <property type="protein sequence ID" value="ABA89576.1"/>
    <property type="molecule type" value="Genomic_DNA"/>
</dbReference>
<dbReference type="RefSeq" id="WP_011342098.1">
    <property type="nucleotide sequence ID" value="NC_007498.2"/>
</dbReference>
<dbReference type="SMR" id="Q3A231"/>
<dbReference type="STRING" id="338963.Pcar_2337"/>
<dbReference type="KEGG" id="pca:Pcar_2337"/>
<dbReference type="eggNOG" id="COG0632">
    <property type="taxonomic scope" value="Bacteria"/>
</dbReference>
<dbReference type="HOGENOM" id="CLU_087936_3_0_7"/>
<dbReference type="OrthoDB" id="5293449at2"/>
<dbReference type="Proteomes" id="UP000002534">
    <property type="component" value="Chromosome"/>
</dbReference>
<dbReference type="GO" id="GO:0005737">
    <property type="term" value="C:cytoplasm"/>
    <property type="evidence" value="ECO:0007669"/>
    <property type="project" value="UniProtKB-SubCell"/>
</dbReference>
<dbReference type="GO" id="GO:0009379">
    <property type="term" value="C:Holliday junction helicase complex"/>
    <property type="evidence" value="ECO:0007669"/>
    <property type="project" value="InterPro"/>
</dbReference>
<dbReference type="GO" id="GO:0048476">
    <property type="term" value="C:Holliday junction resolvase complex"/>
    <property type="evidence" value="ECO:0007669"/>
    <property type="project" value="UniProtKB-UniRule"/>
</dbReference>
<dbReference type="GO" id="GO:0005524">
    <property type="term" value="F:ATP binding"/>
    <property type="evidence" value="ECO:0007669"/>
    <property type="project" value="InterPro"/>
</dbReference>
<dbReference type="GO" id="GO:0000400">
    <property type="term" value="F:four-way junction DNA binding"/>
    <property type="evidence" value="ECO:0007669"/>
    <property type="project" value="UniProtKB-UniRule"/>
</dbReference>
<dbReference type="GO" id="GO:0009378">
    <property type="term" value="F:four-way junction helicase activity"/>
    <property type="evidence" value="ECO:0007669"/>
    <property type="project" value="InterPro"/>
</dbReference>
<dbReference type="GO" id="GO:0006310">
    <property type="term" value="P:DNA recombination"/>
    <property type="evidence" value="ECO:0007669"/>
    <property type="project" value="UniProtKB-UniRule"/>
</dbReference>
<dbReference type="GO" id="GO:0006281">
    <property type="term" value="P:DNA repair"/>
    <property type="evidence" value="ECO:0007669"/>
    <property type="project" value="UniProtKB-UniRule"/>
</dbReference>
<dbReference type="CDD" id="cd14332">
    <property type="entry name" value="UBA_RuvA_C"/>
    <property type="match status" value="1"/>
</dbReference>
<dbReference type="Gene3D" id="1.10.150.20">
    <property type="entry name" value="5' to 3' exonuclease, C-terminal subdomain"/>
    <property type="match status" value="1"/>
</dbReference>
<dbReference type="Gene3D" id="1.10.8.10">
    <property type="entry name" value="DNA helicase RuvA subunit, C-terminal domain"/>
    <property type="match status" value="1"/>
</dbReference>
<dbReference type="Gene3D" id="2.40.50.140">
    <property type="entry name" value="Nucleic acid-binding proteins"/>
    <property type="match status" value="1"/>
</dbReference>
<dbReference type="HAMAP" id="MF_00031">
    <property type="entry name" value="DNA_HJ_migration_RuvA"/>
    <property type="match status" value="1"/>
</dbReference>
<dbReference type="InterPro" id="IPR013849">
    <property type="entry name" value="DNA_helicase_Holl-junc_RuvA_I"/>
</dbReference>
<dbReference type="InterPro" id="IPR003583">
    <property type="entry name" value="Hlx-hairpin-Hlx_DNA-bd_motif"/>
</dbReference>
<dbReference type="InterPro" id="IPR012340">
    <property type="entry name" value="NA-bd_OB-fold"/>
</dbReference>
<dbReference type="InterPro" id="IPR000085">
    <property type="entry name" value="RuvA"/>
</dbReference>
<dbReference type="InterPro" id="IPR010994">
    <property type="entry name" value="RuvA_2-like"/>
</dbReference>
<dbReference type="InterPro" id="IPR011114">
    <property type="entry name" value="RuvA_C"/>
</dbReference>
<dbReference type="InterPro" id="IPR036267">
    <property type="entry name" value="RuvA_C_sf"/>
</dbReference>
<dbReference type="NCBIfam" id="TIGR00084">
    <property type="entry name" value="ruvA"/>
    <property type="match status" value="1"/>
</dbReference>
<dbReference type="Pfam" id="PF14520">
    <property type="entry name" value="HHH_5"/>
    <property type="match status" value="1"/>
</dbReference>
<dbReference type="Pfam" id="PF07499">
    <property type="entry name" value="RuvA_C"/>
    <property type="match status" value="1"/>
</dbReference>
<dbReference type="Pfam" id="PF01330">
    <property type="entry name" value="RuvA_N"/>
    <property type="match status" value="1"/>
</dbReference>
<dbReference type="SMART" id="SM00278">
    <property type="entry name" value="HhH1"/>
    <property type="match status" value="2"/>
</dbReference>
<dbReference type="SUPFAM" id="SSF46929">
    <property type="entry name" value="DNA helicase RuvA subunit, C-terminal domain"/>
    <property type="match status" value="1"/>
</dbReference>
<dbReference type="SUPFAM" id="SSF50249">
    <property type="entry name" value="Nucleic acid-binding proteins"/>
    <property type="match status" value="1"/>
</dbReference>
<dbReference type="SUPFAM" id="SSF47781">
    <property type="entry name" value="RuvA domain 2-like"/>
    <property type="match status" value="1"/>
</dbReference>
<reference key="1">
    <citation type="submission" date="2005-10" db="EMBL/GenBank/DDBJ databases">
        <title>Complete sequence of Pelobacter carbinolicus DSM 2380.</title>
        <authorList>
            <person name="Copeland A."/>
            <person name="Lucas S."/>
            <person name="Lapidus A."/>
            <person name="Barry K."/>
            <person name="Detter J.C."/>
            <person name="Glavina T."/>
            <person name="Hammon N."/>
            <person name="Israni S."/>
            <person name="Pitluck S."/>
            <person name="Chertkov O."/>
            <person name="Schmutz J."/>
            <person name="Larimer F."/>
            <person name="Land M."/>
            <person name="Kyrpides N."/>
            <person name="Ivanova N."/>
            <person name="Richardson P."/>
        </authorList>
    </citation>
    <scope>NUCLEOTIDE SEQUENCE [LARGE SCALE GENOMIC DNA]</scope>
    <source>
        <strain>DSM 2380 / NBRC 103641 / GraBd1</strain>
    </source>
</reference>
<proteinExistence type="inferred from homology"/>
<name>RUVA_SYNC1</name>
<feature type="chain" id="PRO_0000224889" description="Holliday junction branch migration complex subunit RuvA">
    <location>
        <begin position="1"/>
        <end position="197"/>
    </location>
</feature>
<feature type="region of interest" description="Domain I" evidence="1">
    <location>
        <begin position="1"/>
        <end position="63"/>
    </location>
</feature>
<feature type="region of interest" description="Domain II" evidence="1">
    <location>
        <begin position="64"/>
        <end position="142"/>
    </location>
</feature>
<feature type="region of interest" description="Flexible linker" evidence="1">
    <location>
        <begin position="142"/>
        <end position="146"/>
    </location>
</feature>
<feature type="region of interest" description="Domain III" evidence="1">
    <location>
        <begin position="147"/>
        <end position="197"/>
    </location>
</feature>
<comment type="function">
    <text evidence="1">The RuvA-RuvB-RuvC complex processes Holliday junction (HJ) DNA during genetic recombination and DNA repair, while the RuvA-RuvB complex plays an important role in the rescue of blocked DNA replication forks via replication fork reversal (RFR). RuvA specifically binds to HJ cruciform DNA, conferring on it an open structure. The RuvB hexamer acts as an ATP-dependent pump, pulling dsDNA into and through the RuvAB complex. HJ branch migration allows RuvC to scan DNA until it finds its consensus sequence, where it cleaves and resolves the cruciform DNA.</text>
</comment>
<comment type="subunit">
    <text evidence="1">Homotetramer. Forms an RuvA(8)-RuvB(12)-Holliday junction (HJ) complex. HJ DNA is sandwiched between 2 RuvA tetramers; dsDNA enters through RuvA and exits via RuvB. An RuvB hexamer assembles on each DNA strand where it exits the tetramer. Each RuvB hexamer is contacted by two RuvA subunits (via domain III) on 2 adjacent RuvB subunits; this complex drives branch migration. In the full resolvosome a probable DNA-RuvA(4)-RuvB(12)-RuvC(2) complex forms which resolves the HJ.</text>
</comment>
<comment type="subcellular location">
    <subcellularLocation>
        <location evidence="1">Cytoplasm</location>
    </subcellularLocation>
</comment>
<comment type="domain">
    <text evidence="1">Has three domains with a flexible linker between the domains II and III and assumes an 'L' shape. Domain III is highly mobile and contacts RuvB.</text>
</comment>
<comment type="similarity">
    <text evidence="1">Belongs to the RuvA family.</text>
</comment>
<keyword id="KW-0963">Cytoplasm</keyword>
<keyword id="KW-0227">DNA damage</keyword>
<keyword id="KW-0233">DNA recombination</keyword>
<keyword id="KW-0234">DNA repair</keyword>
<keyword id="KW-0238">DNA-binding</keyword>
<keyword id="KW-1185">Reference proteome</keyword>
<sequence>MIALLNGQLIEKTVSQVILDVGGVGYRLLIPLSTYYALPDEGDVRLRVHTHVREDALLLFGFLTETEKDLFGLLLSVSGVGPKVALNILSHLPAADLQQALSQGNAKHLATVPGIGKKTAERLVLELREKVGPVQAVPGNAPLPAETAGDLREDALSALVNLGYKENLSRKALDGIDTAPDAPLEDILKQALKLLMR</sequence>
<evidence type="ECO:0000255" key="1">
    <source>
        <dbReference type="HAMAP-Rule" id="MF_00031"/>
    </source>
</evidence>
<organism>
    <name type="scientific">Syntrophotalea carbinolica (strain DSM 2380 / NBRC 103641 / GraBd1)</name>
    <name type="common">Pelobacter carbinolicus</name>
    <dbReference type="NCBI Taxonomy" id="338963"/>
    <lineage>
        <taxon>Bacteria</taxon>
        <taxon>Pseudomonadati</taxon>
        <taxon>Thermodesulfobacteriota</taxon>
        <taxon>Desulfuromonadia</taxon>
        <taxon>Desulfuromonadales</taxon>
        <taxon>Syntrophotaleaceae</taxon>
        <taxon>Syntrophotalea</taxon>
    </lineage>
</organism>
<gene>
    <name evidence="1" type="primary">ruvA</name>
    <name type="ordered locus">Pcar_2337</name>
</gene>